<dbReference type="EMBL" id="AE016828">
    <property type="protein sequence ID" value="AAO91436.1"/>
    <property type="molecule type" value="Genomic_DNA"/>
</dbReference>
<dbReference type="RefSeq" id="NP_820922.1">
    <property type="nucleotide sequence ID" value="NC_002971.4"/>
</dbReference>
<dbReference type="RefSeq" id="WP_005770045.1">
    <property type="nucleotide sequence ID" value="NZ_CDBG01000001.1"/>
</dbReference>
<dbReference type="SMR" id="Q83AF4"/>
<dbReference type="STRING" id="227377.CBU_1946"/>
<dbReference type="DNASU" id="1209859"/>
<dbReference type="EnsemblBacteria" id="AAO91436">
    <property type="protein sequence ID" value="AAO91436"/>
    <property type="gene ID" value="CBU_1946"/>
</dbReference>
<dbReference type="GeneID" id="1209859"/>
<dbReference type="KEGG" id="cbu:CBU_1946"/>
<dbReference type="PATRIC" id="fig|227377.7.peg.1932"/>
<dbReference type="eggNOG" id="COG0355">
    <property type="taxonomic scope" value="Bacteria"/>
</dbReference>
<dbReference type="HOGENOM" id="CLU_084338_2_0_6"/>
<dbReference type="OrthoDB" id="9791445at2"/>
<dbReference type="Proteomes" id="UP000002671">
    <property type="component" value="Chromosome"/>
</dbReference>
<dbReference type="GO" id="GO:0005886">
    <property type="term" value="C:plasma membrane"/>
    <property type="evidence" value="ECO:0007669"/>
    <property type="project" value="UniProtKB-SubCell"/>
</dbReference>
<dbReference type="GO" id="GO:0045259">
    <property type="term" value="C:proton-transporting ATP synthase complex"/>
    <property type="evidence" value="ECO:0007669"/>
    <property type="project" value="UniProtKB-KW"/>
</dbReference>
<dbReference type="GO" id="GO:0005524">
    <property type="term" value="F:ATP binding"/>
    <property type="evidence" value="ECO:0007669"/>
    <property type="project" value="UniProtKB-UniRule"/>
</dbReference>
<dbReference type="GO" id="GO:0046933">
    <property type="term" value="F:proton-transporting ATP synthase activity, rotational mechanism"/>
    <property type="evidence" value="ECO:0007669"/>
    <property type="project" value="UniProtKB-UniRule"/>
</dbReference>
<dbReference type="GO" id="GO:0015986">
    <property type="term" value="P:proton motive force-driven ATP synthesis"/>
    <property type="evidence" value="ECO:0000318"/>
    <property type="project" value="GO_Central"/>
</dbReference>
<dbReference type="CDD" id="cd12152">
    <property type="entry name" value="F1-ATPase_delta"/>
    <property type="match status" value="1"/>
</dbReference>
<dbReference type="FunFam" id="2.60.15.10:FF:000001">
    <property type="entry name" value="ATP synthase epsilon chain"/>
    <property type="match status" value="1"/>
</dbReference>
<dbReference type="Gene3D" id="1.20.5.440">
    <property type="entry name" value="ATP synthase delta/epsilon subunit, C-terminal domain"/>
    <property type="match status" value="1"/>
</dbReference>
<dbReference type="Gene3D" id="2.60.15.10">
    <property type="entry name" value="F0F1 ATP synthase delta/epsilon subunit, N-terminal"/>
    <property type="match status" value="1"/>
</dbReference>
<dbReference type="HAMAP" id="MF_00530">
    <property type="entry name" value="ATP_synth_epsil_bac"/>
    <property type="match status" value="1"/>
</dbReference>
<dbReference type="InterPro" id="IPR036794">
    <property type="entry name" value="ATP_F1_dsu/esu_C_sf"/>
</dbReference>
<dbReference type="InterPro" id="IPR001469">
    <property type="entry name" value="ATP_synth_F1_dsu/esu"/>
</dbReference>
<dbReference type="InterPro" id="IPR020546">
    <property type="entry name" value="ATP_synth_F1_dsu/esu_N"/>
</dbReference>
<dbReference type="InterPro" id="IPR020547">
    <property type="entry name" value="ATP_synth_F1_esu_C"/>
</dbReference>
<dbReference type="InterPro" id="IPR036771">
    <property type="entry name" value="ATPsynth_dsu/esu_N"/>
</dbReference>
<dbReference type="NCBIfam" id="TIGR01216">
    <property type="entry name" value="ATP_synt_epsi"/>
    <property type="match status" value="1"/>
</dbReference>
<dbReference type="NCBIfam" id="NF001847">
    <property type="entry name" value="PRK00571.1-4"/>
    <property type="match status" value="1"/>
</dbReference>
<dbReference type="PANTHER" id="PTHR13822">
    <property type="entry name" value="ATP SYNTHASE DELTA/EPSILON CHAIN"/>
    <property type="match status" value="1"/>
</dbReference>
<dbReference type="PANTHER" id="PTHR13822:SF10">
    <property type="entry name" value="ATP SYNTHASE EPSILON CHAIN, CHLOROPLASTIC"/>
    <property type="match status" value="1"/>
</dbReference>
<dbReference type="Pfam" id="PF00401">
    <property type="entry name" value="ATP-synt_DE"/>
    <property type="match status" value="1"/>
</dbReference>
<dbReference type="Pfam" id="PF02823">
    <property type="entry name" value="ATP-synt_DE_N"/>
    <property type="match status" value="1"/>
</dbReference>
<dbReference type="SUPFAM" id="SSF46604">
    <property type="entry name" value="Epsilon subunit of F1F0-ATP synthase C-terminal domain"/>
    <property type="match status" value="1"/>
</dbReference>
<dbReference type="SUPFAM" id="SSF51344">
    <property type="entry name" value="Epsilon subunit of F1F0-ATP synthase N-terminal domain"/>
    <property type="match status" value="1"/>
</dbReference>
<organism>
    <name type="scientific">Coxiella burnetii (strain RSA 493 / Nine Mile phase I)</name>
    <dbReference type="NCBI Taxonomy" id="227377"/>
    <lineage>
        <taxon>Bacteria</taxon>
        <taxon>Pseudomonadati</taxon>
        <taxon>Pseudomonadota</taxon>
        <taxon>Gammaproteobacteria</taxon>
        <taxon>Legionellales</taxon>
        <taxon>Coxiellaceae</taxon>
        <taxon>Coxiella</taxon>
    </lineage>
</organism>
<feature type="chain" id="PRO_0000188128" description="ATP synthase epsilon chain">
    <location>
        <begin position="1"/>
        <end position="142"/>
    </location>
</feature>
<evidence type="ECO:0000255" key="1">
    <source>
        <dbReference type="HAMAP-Rule" id="MF_00530"/>
    </source>
</evidence>
<name>ATPE_COXBU</name>
<gene>
    <name evidence="1" type="primary">atpC</name>
    <name type="ordered locus">CBU_1946</name>
</gene>
<comment type="function">
    <text evidence="1">Produces ATP from ADP in the presence of a proton gradient across the membrane.</text>
</comment>
<comment type="subunit">
    <text>F-type ATPases have 2 components, CF(1) - the catalytic core - and CF(0) - the membrane proton channel. CF(1) has five subunits: alpha(3), beta(3), gamma(1), delta(1), epsilon(1). CF(0) has three main subunits: a, b and c.</text>
</comment>
<comment type="subcellular location">
    <subcellularLocation>
        <location evidence="1">Cell inner membrane</location>
        <topology evidence="1">Peripheral membrane protein</topology>
    </subcellularLocation>
</comment>
<comment type="similarity">
    <text evidence="1">Belongs to the ATPase epsilon chain family.</text>
</comment>
<protein>
    <recommendedName>
        <fullName evidence="1">ATP synthase epsilon chain</fullName>
    </recommendedName>
    <alternativeName>
        <fullName evidence="1">ATP synthase F1 sector epsilon subunit</fullName>
    </alternativeName>
    <alternativeName>
        <fullName evidence="1">F-ATPase epsilon subunit</fullName>
    </alternativeName>
</protein>
<accession>Q83AF4</accession>
<sequence length="142" mass="15287">MAKTMQLEIVSAEAAIFSGKVEMIVVTGGMGELGIYPGHRQLLTSLKPGQIKAILEGGKEEVFYMSGGMLEVQPEIVTILADTALRAVDLDEAAAISAKEEAERRLAKQKAGIEYSKAMTELAEAAAQLRAIQMLRKSAKKH</sequence>
<reference key="1">
    <citation type="journal article" date="2003" name="Proc. Natl. Acad. Sci. U.S.A.">
        <title>Complete genome sequence of the Q-fever pathogen, Coxiella burnetii.</title>
        <authorList>
            <person name="Seshadri R."/>
            <person name="Paulsen I.T."/>
            <person name="Eisen J.A."/>
            <person name="Read T.D."/>
            <person name="Nelson K.E."/>
            <person name="Nelson W.C."/>
            <person name="Ward N.L."/>
            <person name="Tettelin H."/>
            <person name="Davidsen T.M."/>
            <person name="Beanan M.J."/>
            <person name="DeBoy R.T."/>
            <person name="Daugherty S.C."/>
            <person name="Brinkac L.M."/>
            <person name="Madupu R."/>
            <person name="Dodson R.J."/>
            <person name="Khouri H.M."/>
            <person name="Lee K.H."/>
            <person name="Carty H.A."/>
            <person name="Scanlan D."/>
            <person name="Heinzen R.A."/>
            <person name="Thompson H.A."/>
            <person name="Samuel J.E."/>
            <person name="Fraser C.M."/>
            <person name="Heidelberg J.F."/>
        </authorList>
    </citation>
    <scope>NUCLEOTIDE SEQUENCE [LARGE SCALE GENOMIC DNA]</scope>
    <source>
        <strain>RSA 493 / Nine Mile phase I</strain>
    </source>
</reference>
<keyword id="KW-0066">ATP synthesis</keyword>
<keyword id="KW-0997">Cell inner membrane</keyword>
<keyword id="KW-1003">Cell membrane</keyword>
<keyword id="KW-0139">CF(1)</keyword>
<keyword id="KW-0375">Hydrogen ion transport</keyword>
<keyword id="KW-0406">Ion transport</keyword>
<keyword id="KW-0472">Membrane</keyword>
<keyword id="KW-1185">Reference proteome</keyword>
<keyword id="KW-0813">Transport</keyword>
<proteinExistence type="inferred from homology"/>